<keyword id="KW-0001">2Fe-2S</keyword>
<keyword id="KW-0004">4Fe-4S</keyword>
<keyword id="KW-0093">Biotin biosynthesis</keyword>
<keyword id="KW-0408">Iron</keyword>
<keyword id="KW-0411">Iron-sulfur</keyword>
<keyword id="KW-0479">Metal-binding</keyword>
<keyword id="KW-0949">S-adenosyl-L-methionine</keyword>
<keyword id="KW-0808">Transferase</keyword>
<name>BIOB_STAAB</name>
<organism>
    <name type="scientific">Staphylococcus aureus (strain bovine RF122 / ET3-1)</name>
    <dbReference type="NCBI Taxonomy" id="273036"/>
    <lineage>
        <taxon>Bacteria</taxon>
        <taxon>Bacillati</taxon>
        <taxon>Bacillota</taxon>
        <taxon>Bacilli</taxon>
        <taxon>Bacillales</taxon>
        <taxon>Staphylococcaceae</taxon>
        <taxon>Staphylococcus</taxon>
    </lineage>
</organism>
<dbReference type="EC" id="2.8.1.6" evidence="1"/>
<dbReference type="EMBL" id="AJ938182">
    <property type="protein sequence ID" value="CAI81995.1"/>
    <property type="molecule type" value="Genomic_DNA"/>
</dbReference>
<dbReference type="RefSeq" id="WP_001046645.1">
    <property type="nucleotide sequence ID" value="NC_007622.1"/>
</dbReference>
<dbReference type="SMR" id="Q2YVY6"/>
<dbReference type="KEGG" id="sab:SAB2306c"/>
<dbReference type="HOGENOM" id="CLU_033172_2_1_9"/>
<dbReference type="UniPathway" id="UPA00078">
    <property type="reaction ID" value="UER00162"/>
</dbReference>
<dbReference type="GO" id="GO:0051537">
    <property type="term" value="F:2 iron, 2 sulfur cluster binding"/>
    <property type="evidence" value="ECO:0007669"/>
    <property type="project" value="UniProtKB-KW"/>
</dbReference>
<dbReference type="GO" id="GO:0051539">
    <property type="term" value="F:4 iron, 4 sulfur cluster binding"/>
    <property type="evidence" value="ECO:0007669"/>
    <property type="project" value="UniProtKB-KW"/>
</dbReference>
<dbReference type="GO" id="GO:0004076">
    <property type="term" value="F:biotin synthase activity"/>
    <property type="evidence" value="ECO:0007669"/>
    <property type="project" value="UniProtKB-UniRule"/>
</dbReference>
<dbReference type="GO" id="GO:0005506">
    <property type="term" value="F:iron ion binding"/>
    <property type="evidence" value="ECO:0007669"/>
    <property type="project" value="UniProtKB-UniRule"/>
</dbReference>
<dbReference type="GO" id="GO:0009102">
    <property type="term" value="P:biotin biosynthetic process"/>
    <property type="evidence" value="ECO:0007669"/>
    <property type="project" value="UniProtKB-UniRule"/>
</dbReference>
<dbReference type="CDD" id="cd01335">
    <property type="entry name" value="Radical_SAM"/>
    <property type="match status" value="1"/>
</dbReference>
<dbReference type="FunFam" id="3.20.20.70:FF:000026">
    <property type="entry name" value="Biotin synthase"/>
    <property type="match status" value="1"/>
</dbReference>
<dbReference type="Gene3D" id="3.20.20.70">
    <property type="entry name" value="Aldolase class I"/>
    <property type="match status" value="1"/>
</dbReference>
<dbReference type="HAMAP" id="MF_01694">
    <property type="entry name" value="BioB"/>
    <property type="match status" value="1"/>
</dbReference>
<dbReference type="InterPro" id="IPR013785">
    <property type="entry name" value="Aldolase_TIM"/>
</dbReference>
<dbReference type="InterPro" id="IPR010722">
    <property type="entry name" value="BATS_dom"/>
</dbReference>
<dbReference type="InterPro" id="IPR002684">
    <property type="entry name" value="Biotin_synth/BioAB"/>
</dbReference>
<dbReference type="InterPro" id="IPR024177">
    <property type="entry name" value="Biotin_synthase"/>
</dbReference>
<dbReference type="InterPro" id="IPR006638">
    <property type="entry name" value="Elp3/MiaA/NifB-like_rSAM"/>
</dbReference>
<dbReference type="InterPro" id="IPR007197">
    <property type="entry name" value="rSAM"/>
</dbReference>
<dbReference type="NCBIfam" id="TIGR00433">
    <property type="entry name" value="bioB"/>
    <property type="match status" value="1"/>
</dbReference>
<dbReference type="PANTHER" id="PTHR22976">
    <property type="entry name" value="BIOTIN SYNTHASE"/>
    <property type="match status" value="1"/>
</dbReference>
<dbReference type="PANTHER" id="PTHR22976:SF2">
    <property type="entry name" value="BIOTIN SYNTHASE, MITOCHONDRIAL"/>
    <property type="match status" value="1"/>
</dbReference>
<dbReference type="Pfam" id="PF06968">
    <property type="entry name" value="BATS"/>
    <property type="match status" value="1"/>
</dbReference>
<dbReference type="Pfam" id="PF04055">
    <property type="entry name" value="Radical_SAM"/>
    <property type="match status" value="1"/>
</dbReference>
<dbReference type="PIRSF" id="PIRSF001619">
    <property type="entry name" value="Biotin_synth"/>
    <property type="match status" value="1"/>
</dbReference>
<dbReference type="SFLD" id="SFLDG01060">
    <property type="entry name" value="BATS_domain_containing"/>
    <property type="match status" value="1"/>
</dbReference>
<dbReference type="SFLD" id="SFLDG01278">
    <property type="entry name" value="biotin_synthase_like"/>
    <property type="match status" value="1"/>
</dbReference>
<dbReference type="SMART" id="SM00876">
    <property type="entry name" value="BATS"/>
    <property type="match status" value="1"/>
</dbReference>
<dbReference type="SMART" id="SM00729">
    <property type="entry name" value="Elp3"/>
    <property type="match status" value="1"/>
</dbReference>
<dbReference type="SUPFAM" id="SSF102114">
    <property type="entry name" value="Radical SAM enzymes"/>
    <property type="match status" value="1"/>
</dbReference>
<dbReference type="PROSITE" id="PS51918">
    <property type="entry name" value="RADICAL_SAM"/>
    <property type="match status" value="1"/>
</dbReference>
<comment type="function">
    <text evidence="1">Catalyzes the conversion of dethiobiotin (DTB) to biotin by the insertion of a sulfur atom into dethiobiotin via a radical-based mechanism.</text>
</comment>
<comment type="catalytic activity">
    <reaction evidence="1">
        <text>(4R,5S)-dethiobiotin + (sulfur carrier)-SH + 2 reduced [2Fe-2S]-[ferredoxin] + 2 S-adenosyl-L-methionine = (sulfur carrier)-H + biotin + 2 5'-deoxyadenosine + 2 L-methionine + 2 oxidized [2Fe-2S]-[ferredoxin]</text>
        <dbReference type="Rhea" id="RHEA:22060"/>
        <dbReference type="Rhea" id="RHEA-COMP:10000"/>
        <dbReference type="Rhea" id="RHEA-COMP:10001"/>
        <dbReference type="Rhea" id="RHEA-COMP:14737"/>
        <dbReference type="Rhea" id="RHEA-COMP:14739"/>
        <dbReference type="ChEBI" id="CHEBI:17319"/>
        <dbReference type="ChEBI" id="CHEBI:29917"/>
        <dbReference type="ChEBI" id="CHEBI:33737"/>
        <dbReference type="ChEBI" id="CHEBI:33738"/>
        <dbReference type="ChEBI" id="CHEBI:57586"/>
        <dbReference type="ChEBI" id="CHEBI:57844"/>
        <dbReference type="ChEBI" id="CHEBI:59789"/>
        <dbReference type="ChEBI" id="CHEBI:64428"/>
        <dbReference type="ChEBI" id="CHEBI:149473"/>
        <dbReference type="EC" id="2.8.1.6"/>
    </reaction>
</comment>
<comment type="cofactor">
    <cofactor evidence="1">
        <name>[4Fe-4S] cluster</name>
        <dbReference type="ChEBI" id="CHEBI:49883"/>
    </cofactor>
    <text evidence="1">Binds 1 [4Fe-4S] cluster. The cluster is coordinated with 3 cysteines and an exchangeable S-adenosyl-L-methionine.</text>
</comment>
<comment type="cofactor">
    <cofactor evidence="1">
        <name>[2Fe-2S] cluster</name>
        <dbReference type="ChEBI" id="CHEBI:190135"/>
    </cofactor>
    <text evidence="1">Binds 1 [2Fe-2S] cluster. The cluster is coordinated with 3 cysteines and 1 arginine.</text>
</comment>
<comment type="pathway">
    <text evidence="1">Cofactor biosynthesis; biotin biosynthesis; biotin from 7,8-diaminononanoate: step 2/2.</text>
</comment>
<comment type="subunit">
    <text evidence="1">Homodimer.</text>
</comment>
<comment type="similarity">
    <text evidence="1">Belongs to the radical SAM superfamily. Biotin synthase family.</text>
</comment>
<feature type="chain" id="PRO_0000381647" description="Biotin synthase">
    <location>
        <begin position="1"/>
        <end position="335"/>
    </location>
</feature>
<feature type="domain" description="Radical SAM core" evidence="2">
    <location>
        <begin position="43"/>
        <end position="269"/>
    </location>
</feature>
<feature type="binding site" evidence="1">
    <location>
        <position position="61"/>
    </location>
    <ligand>
        <name>[4Fe-4S] cluster</name>
        <dbReference type="ChEBI" id="CHEBI:49883"/>
        <note>4Fe-4S-S-AdoMet</note>
    </ligand>
</feature>
<feature type="binding site" evidence="1">
    <location>
        <position position="65"/>
    </location>
    <ligand>
        <name>[4Fe-4S] cluster</name>
        <dbReference type="ChEBI" id="CHEBI:49883"/>
        <note>4Fe-4S-S-AdoMet</note>
    </ligand>
</feature>
<feature type="binding site" evidence="1">
    <location>
        <position position="68"/>
    </location>
    <ligand>
        <name>[4Fe-4S] cluster</name>
        <dbReference type="ChEBI" id="CHEBI:49883"/>
        <note>4Fe-4S-S-AdoMet</note>
    </ligand>
</feature>
<feature type="binding site" evidence="1">
    <location>
        <position position="104"/>
    </location>
    <ligand>
        <name>[2Fe-2S] cluster</name>
        <dbReference type="ChEBI" id="CHEBI:190135"/>
    </ligand>
</feature>
<feature type="binding site" evidence="1">
    <location>
        <position position="137"/>
    </location>
    <ligand>
        <name>[2Fe-2S] cluster</name>
        <dbReference type="ChEBI" id="CHEBI:190135"/>
    </ligand>
</feature>
<feature type="binding site" evidence="1">
    <location>
        <position position="197"/>
    </location>
    <ligand>
        <name>[2Fe-2S] cluster</name>
        <dbReference type="ChEBI" id="CHEBI:190135"/>
    </ligand>
</feature>
<feature type="binding site" evidence="1">
    <location>
        <position position="267"/>
    </location>
    <ligand>
        <name>[2Fe-2S] cluster</name>
        <dbReference type="ChEBI" id="CHEBI:190135"/>
    </ligand>
</feature>
<accession>Q2YVY6</accession>
<gene>
    <name evidence="1" type="primary">bioB</name>
    <name type="ordered locus">SAB2306c</name>
</gene>
<protein>
    <recommendedName>
        <fullName evidence="1">Biotin synthase</fullName>
        <ecNumber evidence="1">2.8.1.6</ecNumber>
    </recommendedName>
</protein>
<reference key="1">
    <citation type="journal article" date="2007" name="PLoS ONE">
        <title>Molecular correlates of host specialization in Staphylococcus aureus.</title>
        <authorList>
            <person name="Herron-Olson L."/>
            <person name="Fitzgerald J.R."/>
            <person name="Musser J.M."/>
            <person name="Kapur V."/>
        </authorList>
    </citation>
    <scope>NUCLEOTIDE SEQUENCE [LARGE SCALE GENOMIC DNA]</scope>
    <source>
        <strain>bovine RF122 / ET3-1</strain>
    </source>
</reference>
<sequence length="335" mass="37545">MNLAKRILQGEQLTKETVLKIYEDTNIDTLDLLNEAYILRKHYFGKKVKLNMILNAKSGICPENCGYCGQSRDIKQKQRYALIPEEQIIDGAKVAHDNHIGTYCIVMSGRGPSDKEVDHISNTVRTIKSQHPQLKICACLGLTNDEQAKKLKSAGVDRYNHNINTSENYHDNVVTTHSYKDRTDTIELMKANNISPCSGVICGMGESNQDIVDMAFALKEMDADSIPINFLHPIKGTKFGSMDDLTPMKCLRIVALFRLINPTKEIRIAGGREVNLRSLQPLALKAANSIFVGDYLITGGQPNQLDYDMINDLGFEIDYDTCENKENKNDVSRAN</sequence>
<evidence type="ECO:0000255" key="1">
    <source>
        <dbReference type="HAMAP-Rule" id="MF_01694"/>
    </source>
</evidence>
<evidence type="ECO:0000255" key="2">
    <source>
        <dbReference type="PROSITE-ProRule" id="PRU01266"/>
    </source>
</evidence>
<proteinExistence type="inferred from homology"/>